<proteinExistence type="evidence at protein level"/>
<organism>
    <name type="scientific">Mycobacterium tuberculosis (strain ATCC 25618 / H37Rv)</name>
    <dbReference type="NCBI Taxonomy" id="83332"/>
    <lineage>
        <taxon>Bacteria</taxon>
        <taxon>Bacillati</taxon>
        <taxon>Actinomycetota</taxon>
        <taxon>Actinomycetes</taxon>
        <taxon>Mycobacteriales</taxon>
        <taxon>Mycobacteriaceae</taxon>
        <taxon>Mycobacterium</taxon>
        <taxon>Mycobacterium tuberculosis complex</taxon>
    </lineage>
</organism>
<feature type="chain" id="PRO_0000419774" description="Menaquinone reductase">
    <location>
        <begin position="1"/>
        <end position="408"/>
    </location>
</feature>
<feature type="binding site" evidence="1">
    <location>
        <begin position="13"/>
        <end position="17"/>
    </location>
    <ligand>
        <name>FAD</name>
        <dbReference type="ChEBI" id="CHEBI:57692"/>
    </ligand>
</feature>
<feature type="binding site" evidence="1">
    <location>
        <begin position="46"/>
        <end position="49"/>
    </location>
    <ligand>
        <name>FAD</name>
        <dbReference type="ChEBI" id="CHEBI:57692"/>
    </ligand>
</feature>
<feature type="binding site" evidence="1">
    <location>
        <position position="103"/>
    </location>
    <ligand>
        <name>FAD</name>
        <dbReference type="ChEBI" id="CHEBI:57692"/>
    </ligand>
</feature>
<feature type="binding site" evidence="1">
    <location>
        <position position="127"/>
    </location>
    <ligand>
        <name>FAD</name>
        <dbReference type="ChEBI" id="CHEBI:57692"/>
    </ligand>
</feature>
<feature type="binding site" evidence="1">
    <location>
        <position position="290"/>
    </location>
    <ligand>
        <name>FAD</name>
        <dbReference type="ChEBI" id="CHEBI:57692"/>
    </ligand>
</feature>
<feature type="binding site" evidence="1">
    <location>
        <begin position="302"/>
        <end position="303"/>
    </location>
    <ligand>
        <name>FAD</name>
        <dbReference type="ChEBI" id="CHEBI:57692"/>
    </ligand>
</feature>
<accession>P9WNY9</accession>
<accession>F2GMK6</accession>
<accession>L0T5R0</accession>
<accession>O06427</accession>
<accession>Q7D9M7</accession>
<comment type="function">
    <text evidence="3">Catalyzes the reduction of a single double bond in the isoprenoid tail of menaquinone (MK-9) in M.tuberculosis, likely the beta-isoprene unit, forming the predominant form of menaquinone found in mycobacteria, MK-9(II-H2). Is required for M.tuberculosis survival in host macrophages.</text>
</comment>
<comment type="catalytic activity">
    <reaction evidence="3">
        <text>menaquinone-9 + AH2 = beta-dihydromenaquinone-9 + A</text>
        <dbReference type="Rhea" id="RHEA:51924"/>
        <dbReference type="ChEBI" id="CHEBI:13193"/>
        <dbReference type="ChEBI" id="CHEBI:17499"/>
        <dbReference type="ChEBI" id="CHEBI:44147"/>
        <dbReference type="ChEBI" id="CHEBI:134607"/>
        <dbReference type="EC" id="1.3.99.38"/>
    </reaction>
</comment>
<comment type="cofactor">
    <cofactor evidence="1">
        <name>FAD</name>
        <dbReference type="ChEBI" id="CHEBI:57692"/>
    </cofactor>
</comment>
<comment type="pathway">
    <text evidence="3">Quinol/quinone metabolism; menaquinone biosynthesis.</text>
</comment>
<comment type="induction">
    <text evidence="2">Constitutively expressed at a low level, not induced by salicylate.</text>
</comment>
<comment type="disruption phenotype">
    <text evidence="3">Cells lacking this gene show complete abolition of the synthesis of MK-9(II-H2) accompanied by accumulation of MK-9. They have similar growth rates than wild-type in both aerated and hypoxic culture conditions. However, despite having similar levels of adhesion and infection at the earliest time point, the survival of mutant bacilli in the macrophages is dramatically reduced.</text>
</comment>
<comment type="similarity">
    <text evidence="5">Belongs to the geranylgeranyl reductase family.</text>
</comment>
<reference key="1">
    <citation type="journal article" date="1998" name="Nature">
        <title>Deciphering the biology of Mycobacterium tuberculosis from the complete genome sequence.</title>
        <authorList>
            <person name="Cole S.T."/>
            <person name="Brosch R."/>
            <person name="Parkhill J."/>
            <person name="Garnier T."/>
            <person name="Churcher C.M."/>
            <person name="Harris D.E."/>
            <person name="Gordon S.V."/>
            <person name="Eiglmeier K."/>
            <person name="Gas S."/>
            <person name="Barry C.E. III"/>
            <person name="Tekaia F."/>
            <person name="Badcock K."/>
            <person name="Basham D."/>
            <person name="Brown D."/>
            <person name="Chillingworth T."/>
            <person name="Connor R."/>
            <person name="Davies R.M."/>
            <person name="Devlin K."/>
            <person name="Feltwell T."/>
            <person name="Gentles S."/>
            <person name="Hamlin N."/>
            <person name="Holroyd S."/>
            <person name="Hornsby T."/>
            <person name="Jagels K."/>
            <person name="Krogh A."/>
            <person name="McLean J."/>
            <person name="Moule S."/>
            <person name="Murphy L.D."/>
            <person name="Oliver S."/>
            <person name="Osborne J."/>
            <person name="Quail M.A."/>
            <person name="Rajandream M.A."/>
            <person name="Rogers J."/>
            <person name="Rutter S."/>
            <person name="Seeger K."/>
            <person name="Skelton S."/>
            <person name="Squares S."/>
            <person name="Squares R."/>
            <person name="Sulston J.E."/>
            <person name="Taylor K."/>
            <person name="Whitehead S."/>
            <person name="Barrell B.G."/>
        </authorList>
    </citation>
    <scope>NUCLEOTIDE SEQUENCE [LARGE SCALE GENOMIC DNA]</scope>
    <source>
        <strain>ATCC 25618 / H37Rv</strain>
    </source>
</reference>
<reference key="2">
    <citation type="journal article" date="2011" name="Mol. Cell. Proteomics">
        <title>Proteogenomic analysis of Mycobacterium tuberculosis by high resolution mass spectrometry.</title>
        <authorList>
            <person name="Kelkar D.S."/>
            <person name="Kumar D."/>
            <person name="Kumar P."/>
            <person name="Balakrishnan L."/>
            <person name="Muthusamy B."/>
            <person name="Yadav A.K."/>
            <person name="Shrivastava P."/>
            <person name="Marimuthu A."/>
            <person name="Anand S."/>
            <person name="Sundaram H."/>
            <person name="Kingsbury R."/>
            <person name="Harsha H.C."/>
            <person name="Nair B."/>
            <person name="Prasad T.S."/>
            <person name="Chauhan D.S."/>
            <person name="Katoch K."/>
            <person name="Katoch V.M."/>
            <person name="Kumar P."/>
            <person name="Chaerkady R."/>
            <person name="Ramachandran S."/>
            <person name="Dash D."/>
            <person name="Pandey A."/>
        </authorList>
    </citation>
    <scope>IDENTIFICATION BY MASS SPECTROMETRY [LARGE SCALE ANALYSIS]</scope>
    <source>
        <strain>ATCC 25618 / H37Rv</strain>
    </source>
</reference>
<reference key="3">
    <citation type="journal article" date="2012" name="PLoS ONE">
        <title>The promoter of Rv0560c is induced by salicylate and structurally-related compounds in Mycobacterium tuberculosis.</title>
        <authorList>
            <person name="Schuessler D.L."/>
            <person name="Parish T."/>
        </authorList>
    </citation>
    <scope>INDUCTION</scope>
    <source>
        <strain>ATCC 25618 / H37Rv</strain>
    </source>
</reference>
<reference key="4">
    <citation type="journal article" date="2015" name="ACS Cent. Sci.">
        <title>Partial saturation of menaquinone in Mycobacterium tuberculosis: function and essentiality of a novel reductase, MenJ.</title>
        <authorList>
            <person name="Upadhyay A."/>
            <person name="Fontes F.L."/>
            <person name="Gonzalez-Juarrero M."/>
            <person name="McNeil M.R."/>
            <person name="Crans D.C."/>
            <person name="Jackson M."/>
            <person name="Crick D.C."/>
        </authorList>
    </citation>
    <scope>IDENTIFICATION</scope>
    <scope>FUNCTION</scope>
    <scope>CATALYTIC ACTIVITY</scope>
    <scope>DISRUPTION PHENOTYPE</scope>
    <scope>PATHWAY</scope>
    <source>
        <strain>H37Rv</strain>
    </source>
</reference>
<evidence type="ECO:0000250" key="1">
    <source>
        <dbReference type="UniProtKB" id="Q9HKS9"/>
    </source>
</evidence>
<evidence type="ECO:0000269" key="2">
    <source>
    </source>
</evidence>
<evidence type="ECO:0000269" key="3">
    <source>
    </source>
</evidence>
<evidence type="ECO:0000303" key="4">
    <source>
    </source>
</evidence>
<evidence type="ECO:0000305" key="5"/>
<sequence length="408" mass="43870">MSVDDSADVVVVGAGPAGSAAAAWAARAGRDVLVIDTATFPRDKPCGDGLTPRAVAELHQLGLGKWLADHIRHRGLRMSGFGGEVEVDWPGPSFPSYGSAVARLELDDRIRKVAEDTGARMLLGAKAVAVHHDSSRRVVSLTLADGTEVGCRQLIVADGARSPLGRKLGRRWHRETVYGVAVRGYLSTAYSDDPWLTSHLELRSPDGAVLPGYGWIFPLGNGEVNIGVGALSTSRRPADLALRPLISYYTDLRRDEWGFTGQPRAVSSALLPMGGAVSGVAGSNWMLIGDAAACVNPLNGEGIDYGLETGRLAAELLDSRDLARLWPSLLADRYGRGFSVARRLALLLTFPRFLPTTGPITMRSTALMNIAVRVMSNLVTDDDRDWVARVWRGGGQLSRLVDRRPPFS</sequence>
<gene>
    <name evidence="4" type="primary">menJ</name>
    <name type="ordered locus">Rv0561c</name>
</gene>
<keyword id="KW-0274">FAD</keyword>
<keyword id="KW-0285">Flavoprotein</keyword>
<keyword id="KW-0474">Menaquinone biosynthesis</keyword>
<keyword id="KW-0560">Oxidoreductase</keyword>
<keyword id="KW-1185">Reference proteome</keyword>
<keyword id="KW-0843">Virulence</keyword>
<name>MENJ_MYCTU</name>
<protein>
    <recommendedName>
        <fullName evidence="4">Menaquinone reductase</fullName>
        <shortName evidence="4">MK reductase</shortName>
        <ecNumber evidence="3">1.3.99.38</ecNumber>
    </recommendedName>
</protein>
<dbReference type="EC" id="1.3.99.38" evidence="3"/>
<dbReference type="EMBL" id="AL123456">
    <property type="protein sequence ID" value="CCP43299.1"/>
    <property type="molecule type" value="Genomic_DNA"/>
</dbReference>
<dbReference type="PIR" id="D70549">
    <property type="entry name" value="D70549"/>
</dbReference>
<dbReference type="RefSeq" id="NP_215075.1">
    <property type="nucleotide sequence ID" value="NC_000962.3"/>
</dbReference>
<dbReference type="RefSeq" id="WP_003402939.1">
    <property type="nucleotide sequence ID" value="NZ_NVQJ01000036.1"/>
</dbReference>
<dbReference type="SMR" id="P9WNY9"/>
<dbReference type="FunCoup" id="P9WNY9">
    <property type="interactions" value="196"/>
</dbReference>
<dbReference type="STRING" id="83332.Rv0561c"/>
<dbReference type="PaxDb" id="83332-Rv0561c"/>
<dbReference type="DNASU" id="887638"/>
<dbReference type="GeneID" id="887638"/>
<dbReference type="KEGG" id="mtu:Rv0561c"/>
<dbReference type="KEGG" id="mtv:RVBD_0561c"/>
<dbReference type="TubercuList" id="Rv0561c"/>
<dbReference type="eggNOG" id="COG0644">
    <property type="taxonomic scope" value="Bacteria"/>
</dbReference>
<dbReference type="InParanoid" id="P9WNY9"/>
<dbReference type="OrthoDB" id="9795712at2"/>
<dbReference type="PhylomeDB" id="P9WNY9"/>
<dbReference type="BioCyc" id="MetaCyc:G185E-4694-MONOMER"/>
<dbReference type="BRENDA" id="1.3.99.38">
    <property type="organism ID" value="3445"/>
</dbReference>
<dbReference type="UniPathway" id="UPA00079"/>
<dbReference type="Proteomes" id="UP000001584">
    <property type="component" value="Chromosome"/>
</dbReference>
<dbReference type="GO" id="GO:0009274">
    <property type="term" value="C:peptidoglycan-based cell wall"/>
    <property type="evidence" value="ECO:0007005"/>
    <property type="project" value="MTBBASE"/>
</dbReference>
<dbReference type="GO" id="GO:0071949">
    <property type="term" value="F:FAD binding"/>
    <property type="evidence" value="ECO:0007669"/>
    <property type="project" value="InterPro"/>
</dbReference>
<dbReference type="GO" id="GO:0016627">
    <property type="term" value="F:oxidoreductase activity, acting on the CH-CH group of donors"/>
    <property type="evidence" value="ECO:0000315"/>
    <property type="project" value="UniProtKB"/>
</dbReference>
<dbReference type="GO" id="GO:0016628">
    <property type="term" value="F:oxidoreductase activity, acting on the CH-CH group of donors, NAD or NADP as acceptor"/>
    <property type="evidence" value="ECO:0007669"/>
    <property type="project" value="InterPro"/>
</dbReference>
<dbReference type="GO" id="GO:0009234">
    <property type="term" value="P:menaquinone biosynthetic process"/>
    <property type="evidence" value="ECO:0000315"/>
    <property type="project" value="UniProtKB"/>
</dbReference>
<dbReference type="FunFam" id="3.50.50.60:FF:000364">
    <property type="entry name" value="Possible oxidoreductase"/>
    <property type="match status" value="1"/>
</dbReference>
<dbReference type="Gene3D" id="3.50.50.60">
    <property type="entry name" value="FAD/NAD(P)-binding domain"/>
    <property type="match status" value="1"/>
</dbReference>
<dbReference type="InterPro" id="IPR002938">
    <property type="entry name" value="FAD-bd"/>
</dbReference>
<dbReference type="InterPro" id="IPR036188">
    <property type="entry name" value="FAD/NAD-bd_sf"/>
</dbReference>
<dbReference type="InterPro" id="IPR011777">
    <property type="entry name" value="Geranylgeranyl_Rdtase_fam"/>
</dbReference>
<dbReference type="InterPro" id="IPR050407">
    <property type="entry name" value="Geranylgeranyl_reductase"/>
</dbReference>
<dbReference type="InterPro" id="IPR054880">
    <property type="entry name" value="MkRedMenJ"/>
</dbReference>
<dbReference type="NCBIfam" id="TIGR02032">
    <property type="entry name" value="GG-red-SF"/>
    <property type="match status" value="1"/>
</dbReference>
<dbReference type="NCBIfam" id="NF045655">
    <property type="entry name" value="MkRedMenJ"/>
    <property type="match status" value="1"/>
</dbReference>
<dbReference type="PANTHER" id="PTHR42685:SF22">
    <property type="entry name" value="CONDITIONED MEDIUM FACTOR RECEPTOR 1"/>
    <property type="match status" value="1"/>
</dbReference>
<dbReference type="PANTHER" id="PTHR42685">
    <property type="entry name" value="GERANYLGERANYL DIPHOSPHATE REDUCTASE"/>
    <property type="match status" value="1"/>
</dbReference>
<dbReference type="Pfam" id="PF01494">
    <property type="entry name" value="FAD_binding_3"/>
    <property type="match status" value="1"/>
</dbReference>
<dbReference type="PRINTS" id="PR00420">
    <property type="entry name" value="RNGMNOXGNASE"/>
</dbReference>
<dbReference type="SUPFAM" id="SSF51905">
    <property type="entry name" value="FAD/NAD(P)-binding domain"/>
    <property type="match status" value="1"/>
</dbReference>